<keyword id="KW-0025">Alternative splicing</keyword>
<keyword id="KW-0406">Ion transport</keyword>
<keyword id="KW-0472">Membrane</keyword>
<keyword id="KW-0496">Mitochondrion</keyword>
<keyword id="KW-1000">Mitochondrion outer membrane</keyword>
<keyword id="KW-0626">Porin</keyword>
<keyword id="KW-0653">Protein transport</keyword>
<keyword id="KW-1267">Proteomics identification</keyword>
<keyword id="KW-1185">Reference proteome</keyword>
<keyword id="KW-0812">Transmembrane</keyword>
<keyword id="KW-1134">Transmembrane beta strand</keyword>
<keyword id="KW-0813">Transport</keyword>
<organism>
    <name type="scientific">Homo sapiens</name>
    <name type="common">Human</name>
    <dbReference type="NCBI Taxonomy" id="9606"/>
    <lineage>
        <taxon>Eukaryota</taxon>
        <taxon>Metazoa</taxon>
        <taxon>Chordata</taxon>
        <taxon>Craniata</taxon>
        <taxon>Vertebrata</taxon>
        <taxon>Euteleostomi</taxon>
        <taxon>Mammalia</taxon>
        <taxon>Eutheria</taxon>
        <taxon>Euarchontoglires</taxon>
        <taxon>Primates</taxon>
        <taxon>Haplorrhini</taxon>
        <taxon>Catarrhini</taxon>
        <taxon>Hominidae</taxon>
        <taxon>Homo</taxon>
    </lineage>
</organism>
<evidence type="ECO:0000250" key="1"/>
<evidence type="ECO:0000256" key="2">
    <source>
        <dbReference type="SAM" id="MobiDB-lite"/>
    </source>
</evidence>
<evidence type="ECO:0000269" key="3">
    <source>
    </source>
</evidence>
<evidence type="ECO:0000303" key="4">
    <source>
    </source>
</evidence>
<evidence type="ECO:0000305" key="5"/>
<accession>Q969M1</accession>
<accession>B7Z4U0</accession>
<accession>D3DVG9</accession>
<reference key="1">
    <citation type="journal article" date="2004" name="Nat. Genet.">
        <title>Complete sequencing and characterization of 21,243 full-length human cDNAs.</title>
        <authorList>
            <person name="Ota T."/>
            <person name="Suzuki Y."/>
            <person name="Nishikawa T."/>
            <person name="Otsuki T."/>
            <person name="Sugiyama T."/>
            <person name="Irie R."/>
            <person name="Wakamatsu A."/>
            <person name="Hayashi K."/>
            <person name="Sato H."/>
            <person name="Nagai K."/>
            <person name="Kimura K."/>
            <person name="Makita H."/>
            <person name="Sekine M."/>
            <person name="Obayashi M."/>
            <person name="Nishi T."/>
            <person name="Shibahara T."/>
            <person name="Tanaka T."/>
            <person name="Ishii S."/>
            <person name="Yamamoto J."/>
            <person name="Saito K."/>
            <person name="Kawai Y."/>
            <person name="Isono Y."/>
            <person name="Nakamura Y."/>
            <person name="Nagahari K."/>
            <person name="Murakami K."/>
            <person name="Yasuda T."/>
            <person name="Iwayanagi T."/>
            <person name="Wagatsuma M."/>
            <person name="Shiratori A."/>
            <person name="Sudo H."/>
            <person name="Hosoiri T."/>
            <person name="Kaku Y."/>
            <person name="Kodaira H."/>
            <person name="Kondo H."/>
            <person name="Sugawara M."/>
            <person name="Takahashi M."/>
            <person name="Kanda K."/>
            <person name="Yokoi T."/>
            <person name="Furuya T."/>
            <person name="Kikkawa E."/>
            <person name="Omura Y."/>
            <person name="Abe K."/>
            <person name="Kamihara K."/>
            <person name="Katsuta N."/>
            <person name="Sato K."/>
            <person name="Tanikawa M."/>
            <person name="Yamazaki M."/>
            <person name="Ninomiya K."/>
            <person name="Ishibashi T."/>
            <person name="Yamashita H."/>
            <person name="Murakawa K."/>
            <person name="Fujimori K."/>
            <person name="Tanai H."/>
            <person name="Kimata M."/>
            <person name="Watanabe M."/>
            <person name="Hiraoka S."/>
            <person name="Chiba Y."/>
            <person name="Ishida S."/>
            <person name="Ono Y."/>
            <person name="Takiguchi S."/>
            <person name="Watanabe S."/>
            <person name="Yosida M."/>
            <person name="Hotuta T."/>
            <person name="Kusano J."/>
            <person name="Kanehori K."/>
            <person name="Takahashi-Fujii A."/>
            <person name="Hara H."/>
            <person name="Tanase T.-O."/>
            <person name="Nomura Y."/>
            <person name="Togiya S."/>
            <person name="Komai F."/>
            <person name="Hara R."/>
            <person name="Takeuchi K."/>
            <person name="Arita M."/>
            <person name="Imose N."/>
            <person name="Musashino K."/>
            <person name="Yuuki H."/>
            <person name="Oshima A."/>
            <person name="Sasaki N."/>
            <person name="Aotsuka S."/>
            <person name="Yoshikawa Y."/>
            <person name="Matsunawa H."/>
            <person name="Ichihara T."/>
            <person name="Shiohata N."/>
            <person name="Sano S."/>
            <person name="Moriya S."/>
            <person name="Momiyama H."/>
            <person name="Satoh N."/>
            <person name="Takami S."/>
            <person name="Terashima Y."/>
            <person name="Suzuki O."/>
            <person name="Nakagawa S."/>
            <person name="Senoh A."/>
            <person name="Mizoguchi H."/>
            <person name="Goto Y."/>
            <person name="Shimizu F."/>
            <person name="Wakebe H."/>
            <person name="Hishigaki H."/>
            <person name="Watanabe T."/>
            <person name="Sugiyama A."/>
            <person name="Takemoto M."/>
            <person name="Kawakami B."/>
            <person name="Yamazaki M."/>
            <person name="Watanabe K."/>
            <person name="Kumagai A."/>
            <person name="Itakura S."/>
            <person name="Fukuzumi Y."/>
            <person name="Fujimori Y."/>
            <person name="Komiyama M."/>
            <person name="Tashiro H."/>
            <person name="Tanigami A."/>
            <person name="Fujiwara T."/>
            <person name="Ono T."/>
            <person name="Yamada K."/>
            <person name="Fujii Y."/>
            <person name="Ozaki K."/>
            <person name="Hirao M."/>
            <person name="Ohmori Y."/>
            <person name="Kawabata A."/>
            <person name="Hikiji T."/>
            <person name="Kobatake N."/>
            <person name="Inagaki H."/>
            <person name="Ikema Y."/>
            <person name="Okamoto S."/>
            <person name="Okitani R."/>
            <person name="Kawakami T."/>
            <person name="Noguchi S."/>
            <person name="Itoh T."/>
            <person name="Shigeta K."/>
            <person name="Senba T."/>
            <person name="Matsumura K."/>
            <person name="Nakajima Y."/>
            <person name="Mizuno T."/>
            <person name="Morinaga M."/>
            <person name="Sasaki M."/>
            <person name="Togashi T."/>
            <person name="Oyama M."/>
            <person name="Hata H."/>
            <person name="Watanabe M."/>
            <person name="Komatsu T."/>
            <person name="Mizushima-Sugano J."/>
            <person name="Satoh T."/>
            <person name="Shirai Y."/>
            <person name="Takahashi Y."/>
            <person name="Nakagawa K."/>
            <person name="Okumura K."/>
            <person name="Nagase T."/>
            <person name="Nomura N."/>
            <person name="Kikuchi H."/>
            <person name="Masuho Y."/>
            <person name="Yamashita R."/>
            <person name="Nakai K."/>
            <person name="Yada T."/>
            <person name="Nakamura Y."/>
            <person name="Ohara O."/>
            <person name="Isogai T."/>
            <person name="Sugano S."/>
        </authorList>
    </citation>
    <scope>NUCLEOTIDE SEQUENCE [LARGE SCALE MRNA] (ISOFORMS 1 AND 2)</scope>
    <source>
        <tissue>Heart</tissue>
    </source>
</reference>
<reference key="2">
    <citation type="journal article" date="2007" name="BMC Genomics">
        <title>The full-ORF clone resource of the German cDNA consortium.</title>
        <authorList>
            <person name="Bechtel S."/>
            <person name="Rosenfelder H."/>
            <person name="Duda A."/>
            <person name="Schmidt C.P."/>
            <person name="Ernst U."/>
            <person name="Wellenreuther R."/>
            <person name="Mehrle A."/>
            <person name="Schuster C."/>
            <person name="Bahr A."/>
            <person name="Bloecker H."/>
            <person name="Heubner D."/>
            <person name="Hoerlein A."/>
            <person name="Michel G."/>
            <person name="Wedler H."/>
            <person name="Koehrer K."/>
            <person name="Ottenwaelder B."/>
            <person name="Poustka A."/>
            <person name="Wiemann S."/>
            <person name="Schupp I."/>
        </authorList>
    </citation>
    <scope>NUCLEOTIDE SEQUENCE [LARGE SCALE MRNA] (ISOFORM 1)</scope>
    <source>
        <tissue>Retina</tissue>
    </source>
</reference>
<reference key="3">
    <citation type="journal article" date="2006" name="Nature">
        <title>The DNA sequence and biological annotation of human chromosome 1.</title>
        <authorList>
            <person name="Gregory S.G."/>
            <person name="Barlow K.F."/>
            <person name="McLay K.E."/>
            <person name="Kaul R."/>
            <person name="Swarbreck D."/>
            <person name="Dunham A."/>
            <person name="Scott C.E."/>
            <person name="Howe K.L."/>
            <person name="Woodfine K."/>
            <person name="Spencer C.C.A."/>
            <person name="Jones M.C."/>
            <person name="Gillson C."/>
            <person name="Searle S."/>
            <person name="Zhou Y."/>
            <person name="Kokocinski F."/>
            <person name="McDonald L."/>
            <person name="Evans R."/>
            <person name="Phillips K."/>
            <person name="Atkinson A."/>
            <person name="Cooper R."/>
            <person name="Jones C."/>
            <person name="Hall R.E."/>
            <person name="Andrews T.D."/>
            <person name="Lloyd C."/>
            <person name="Ainscough R."/>
            <person name="Almeida J.P."/>
            <person name="Ambrose K.D."/>
            <person name="Anderson F."/>
            <person name="Andrew R.W."/>
            <person name="Ashwell R.I.S."/>
            <person name="Aubin K."/>
            <person name="Babbage A.K."/>
            <person name="Bagguley C.L."/>
            <person name="Bailey J."/>
            <person name="Beasley H."/>
            <person name="Bethel G."/>
            <person name="Bird C.P."/>
            <person name="Bray-Allen S."/>
            <person name="Brown J.Y."/>
            <person name="Brown A.J."/>
            <person name="Buckley D."/>
            <person name="Burton J."/>
            <person name="Bye J."/>
            <person name="Carder C."/>
            <person name="Chapman J.C."/>
            <person name="Clark S.Y."/>
            <person name="Clarke G."/>
            <person name="Clee C."/>
            <person name="Cobley V."/>
            <person name="Collier R.E."/>
            <person name="Corby N."/>
            <person name="Coville G.J."/>
            <person name="Davies J."/>
            <person name="Deadman R."/>
            <person name="Dunn M."/>
            <person name="Earthrowl M."/>
            <person name="Ellington A.G."/>
            <person name="Errington H."/>
            <person name="Frankish A."/>
            <person name="Frankland J."/>
            <person name="French L."/>
            <person name="Garner P."/>
            <person name="Garnett J."/>
            <person name="Gay L."/>
            <person name="Ghori M.R.J."/>
            <person name="Gibson R."/>
            <person name="Gilby L.M."/>
            <person name="Gillett W."/>
            <person name="Glithero R.J."/>
            <person name="Grafham D.V."/>
            <person name="Griffiths C."/>
            <person name="Griffiths-Jones S."/>
            <person name="Grocock R."/>
            <person name="Hammond S."/>
            <person name="Harrison E.S.I."/>
            <person name="Hart E."/>
            <person name="Haugen E."/>
            <person name="Heath P.D."/>
            <person name="Holmes S."/>
            <person name="Holt K."/>
            <person name="Howden P.J."/>
            <person name="Hunt A.R."/>
            <person name="Hunt S.E."/>
            <person name="Hunter G."/>
            <person name="Isherwood J."/>
            <person name="James R."/>
            <person name="Johnson C."/>
            <person name="Johnson D."/>
            <person name="Joy A."/>
            <person name="Kay M."/>
            <person name="Kershaw J.K."/>
            <person name="Kibukawa M."/>
            <person name="Kimberley A.M."/>
            <person name="King A."/>
            <person name="Knights A.J."/>
            <person name="Lad H."/>
            <person name="Laird G."/>
            <person name="Lawlor S."/>
            <person name="Leongamornlert D.A."/>
            <person name="Lloyd D.M."/>
            <person name="Loveland J."/>
            <person name="Lovell J."/>
            <person name="Lush M.J."/>
            <person name="Lyne R."/>
            <person name="Martin S."/>
            <person name="Mashreghi-Mohammadi M."/>
            <person name="Matthews L."/>
            <person name="Matthews N.S.W."/>
            <person name="McLaren S."/>
            <person name="Milne S."/>
            <person name="Mistry S."/>
            <person name="Moore M.J.F."/>
            <person name="Nickerson T."/>
            <person name="O'Dell C.N."/>
            <person name="Oliver K."/>
            <person name="Palmeiri A."/>
            <person name="Palmer S.A."/>
            <person name="Parker A."/>
            <person name="Patel D."/>
            <person name="Pearce A.V."/>
            <person name="Peck A.I."/>
            <person name="Pelan S."/>
            <person name="Phelps K."/>
            <person name="Phillimore B.J."/>
            <person name="Plumb R."/>
            <person name="Rajan J."/>
            <person name="Raymond C."/>
            <person name="Rouse G."/>
            <person name="Saenphimmachak C."/>
            <person name="Sehra H.K."/>
            <person name="Sheridan E."/>
            <person name="Shownkeen R."/>
            <person name="Sims S."/>
            <person name="Skuce C.D."/>
            <person name="Smith M."/>
            <person name="Steward C."/>
            <person name="Subramanian S."/>
            <person name="Sycamore N."/>
            <person name="Tracey A."/>
            <person name="Tromans A."/>
            <person name="Van Helmond Z."/>
            <person name="Wall M."/>
            <person name="Wallis J.M."/>
            <person name="White S."/>
            <person name="Whitehead S.L."/>
            <person name="Wilkinson J.E."/>
            <person name="Willey D.L."/>
            <person name="Williams H."/>
            <person name="Wilming L."/>
            <person name="Wray P.W."/>
            <person name="Wu Z."/>
            <person name="Coulson A."/>
            <person name="Vaudin M."/>
            <person name="Sulston J.E."/>
            <person name="Durbin R.M."/>
            <person name="Hubbard T."/>
            <person name="Wooster R."/>
            <person name="Dunham I."/>
            <person name="Carter N.P."/>
            <person name="McVean G."/>
            <person name="Ross M.T."/>
            <person name="Harrow J."/>
            <person name="Olson M.V."/>
            <person name="Beck S."/>
            <person name="Rogers J."/>
            <person name="Bentley D.R."/>
        </authorList>
    </citation>
    <scope>NUCLEOTIDE SEQUENCE [LARGE SCALE GENOMIC DNA]</scope>
</reference>
<reference key="4">
    <citation type="submission" date="2005-09" db="EMBL/GenBank/DDBJ databases">
        <authorList>
            <person name="Mural R.J."/>
            <person name="Istrail S."/>
            <person name="Sutton G.G."/>
            <person name="Florea L."/>
            <person name="Halpern A.L."/>
            <person name="Mobarry C.M."/>
            <person name="Lippert R."/>
            <person name="Walenz B."/>
            <person name="Shatkay H."/>
            <person name="Dew I."/>
            <person name="Miller J.R."/>
            <person name="Flanigan M.J."/>
            <person name="Edwards N.J."/>
            <person name="Bolanos R."/>
            <person name="Fasulo D."/>
            <person name="Halldorsson B.V."/>
            <person name="Hannenhalli S."/>
            <person name="Turner R."/>
            <person name="Yooseph S."/>
            <person name="Lu F."/>
            <person name="Nusskern D.R."/>
            <person name="Shue B.C."/>
            <person name="Zheng X.H."/>
            <person name="Zhong F."/>
            <person name="Delcher A.L."/>
            <person name="Huson D.H."/>
            <person name="Kravitz S.A."/>
            <person name="Mouchard L."/>
            <person name="Reinert K."/>
            <person name="Remington K.A."/>
            <person name="Clark A.G."/>
            <person name="Waterman M.S."/>
            <person name="Eichler E.E."/>
            <person name="Adams M.D."/>
            <person name="Hunkapiller M.W."/>
            <person name="Myers E.W."/>
            <person name="Venter J.C."/>
        </authorList>
    </citation>
    <scope>NUCLEOTIDE SEQUENCE [LARGE SCALE GENOMIC DNA]</scope>
</reference>
<reference key="5">
    <citation type="journal article" date="2004" name="Genome Res.">
        <title>The status, quality, and expansion of the NIH full-length cDNA project: the Mammalian Gene Collection (MGC).</title>
        <authorList>
            <consortium name="The MGC Project Team"/>
        </authorList>
    </citation>
    <scope>NUCLEOTIDE SEQUENCE [LARGE SCALE MRNA] (ISOFORM 1)</scope>
    <source>
        <tissue>Skin</tissue>
    </source>
</reference>
<reference key="6">
    <citation type="journal article" date="2015" name="Proteomics">
        <title>N-terminome analysis of the human mitochondrial proteome.</title>
        <authorList>
            <person name="Vaca Jacome A.S."/>
            <person name="Rabilloud T."/>
            <person name="Schaeffer-Reiss C."/>
            <person name="Rompais M."/>
            <person name="Ayoub D."/>
            <person name="Lane L."/>
            <person name="Bairoch A."/>
            <person name="Van Dorsselaer A."/>
            <person name="Carapito C."/>
        </authorList>
    </citation>
    <scope>IDENTIFICATION BY MASS SPECTROMETRY [LARGE SCALE ANALYSIS]</scope>
</reference>
<reference key="7">
    <citation type="journal article" date="2006" name="Science">
        <title>The consensus coding sequences of human breast and colorectal cancers.</title>
        <authorList>
            <person name="Sjoeblom T."/>
            <person name="Jones S."/>
            <person name="Wood L.D."/>
            <person name="Parsons D.W."/>
            <person name="Lin J."/>
            <person name="Barber T.D."/>
            <person name="Mandelker D."/>
            <person name="Leary R.J."/>
            <person name="Ptak J."/>
            <person name="Silliman N."/>
            <person name="Szabo S."/>
            <person name="Buckhaults P."/>
            <person name="Farrell C."/>
            <person name="Meeh P."/>
            <person name="Markowitz S.D."/>
            <person name="Willis J."/>
            <person name="Dawson D."/>
            <person name="Willson J.K.V."/>
            <person name="Gazdar A.F."/>
            <person name="Hartigan J."/>
            <person name="Wu L."/>
            <person name="Liu C."/>
            <person name="Parmigiani G."/>
            <person name="Park B.H."/>
            <person name="Bachman K.E."/>
            <person name="Papadopoulos N."/>
            <person name="Vogelstein B."/>
            <person name="Kinzler K.W."/>
            <person name="Velculescu V.E."/>
        </authorList>
    </citation>
    <scope>VARIANT [LARGE SCALE ANALYSIS] ASN-100</scope>
</reference>
<comment type="function">
    <text evidence="1">Potential channel-forming protein implicated in import of protein precursors into mitochondria.</text>
</comment>
<comment type="subunit">
    <text evidence="1">Forms part of the preprotein translocase of the outer mitochondrial membrane (TOM complex) containing TOMM22, TOMM40, TOMM40L and TOMM70. Interacts with mitochondrial targeting sequences (By similarity).</text>
</comment>
<comment type="subcellular location">
    <subcellularLocation>
        <location evidence="1">Mitochondrion outer membrane</location>
        <topology evidence="1">Multi-pass membrane protein</topology>
    </subcellularLocation>
</comment>
<comment type="alternative products">
    <event type="alternative splicing"/>
    <isoform>
        <id>Q969M1-1</id>
        <name>1</name>
        <sequence type="displayed"/>
    </isoform>
    <isoform>
        <id>Q969M1-2</id>
        <name>2</name>
        <sequence type="described" ref="VSP_054885"/>
    </isoform>
</comment>
<comment type="similarity">
    <text evidence="5">Belongs to the Tom40 family.</text>
</comment>
<dbReference type="EMBL" id="AK027704">
    <property type="protein sequence ID" value="BAB55309.1"/>
    <property type="molecule type" value="mRNA"/>
</dbReference>
<dbReference type="EMBL" id="AK297848">
    <property type="protein sequence ID" value="BAH12676.1"/>
    <property type="molecule type" value="mRNA"/>
</dbReference>
<dbReference type="EMBL" id="BX537951">
    <property type="protein sequence ID" value="CAD97918.1"/>
    <property type="molecule type" value="mRNA"/>
</dbReference>
<dbReference type="EMBL" id="AL590714">
    <property type="status" value="NOT_ANNOTATED_CDS"/>
    <property type="molecule type" value="Genomic_DNA"/>
</dbReference>
<dbReference type="EMBL" id="CH471121">
    <property type="protein sequence ID" value="EAW52611.1"/>
    <property type="molecule type" value="Genomic_DNA"/>
</dbReference>
<dbReference type="EMBL" id="CH471121">
    <property type="protein sequence ID" value="EAW52615.1"/>
    <property type="molecule type" value="Genomic_DNA"/>
</dbReference>
<dbReference type="EMBL" id="CH471121">
    <property type="protein sequence ID" value="EAW52616.1"/>
    <property type="molecule type" value="Genomic_DNA"/>
</dbReference>
<dbReference type="EMBL" id="BC014946">
    <property type="protein sequence ID" value="AAH14946.1"/>
    <property type="molecule type" value="mRNA"/>
</dbReference>
<dbReference type="CCDS" id="CCDS1227.1">
    <molecule id="Q969M1-1"/>
</dbReference>
<dbReference type="CCDS" id="CCDS65700.1">
    <molecule id="Q969M1-2"/>
</dbReference>
<dbReference type="RefSeq" id="NP_001273302.1">
    <molecule id="Q969M1-2"/>
    <property type="nucleotide sequence ID" value="NM_001286373.2"/>
</dbReference>
<dbReference type="RefSeq" id="NP_115550.2">
    <molecule id="Q969M1-1"/>
    <property type="nucleotide sequence ID" value="NM_032174.5"/>
</dbReference>
<dbReference type="RefSeq" id="XP_006711635.1">
    <molecule id="Q969M1-1"/>
    <property type="nucleotide sequence ID" value="XM_006711572.3"/>
</dbReference>
<dbReference type="RefSeq" id="XP_016857970.1">
    <property type="nucleotide sequence ID" value="XM_017002481.1"/>
</dbReference>
<dbReference type="RefSeq" id="XP_016857971.1">
    <property type="nucleotide sequence ID" value="XM_017002482.1"/>
</dbReference>
<dbReference type="RefSeq" id="XP_047287853.1">
    <molecule id="Q969M1-2"/>
    <property type="nucleotide sequence ID" value="XM_047431897.1"/>
</dbReference>
<dbReference type="RefSeq" id="XP_054195057.1">
    <molecule id="Q969M1-1"/>
    <property type="nucleotide sequence ID" value="XM_054339082.1"/>
</dbReference>
<dbReference type="RefSeq" id="XP_054195058.1">
    <molecule id="Q969M1-2"/>
    <property type="nucleotide sequence ID" value="XM_054339083.1"/>
</dbReference>
<dbReference type="SMR" id="Q969M1"/>
<dbReference type="BioGRID" id="123906">
    <property type="interactions" value="8"/>
</dbReference>
<dbReference type="FunCoup" id="Q969M1">
    <property type="interactions" value="424"/>
</dbReference>
<dbReference type="IntAct" id="Q969M1">
    <property type="interactions" value="4"/>
</dbReference>
<dbReference type="STRING" id="9606.ENSP00000356967"/>
<dbReference type="iPTMnet" id="Q969M1"/>
<dbReference type="PhosphoSitePlus" id="Q969M1"/>
<dbReference type="SwissPalm" id="Q969M1"/>
<dbReference type="BioMuta" id="TOMM40L"/>
<dbReference type="DMDM" id="74751722"/>
<dbReference type="jPOST" id="Q969M1"/>
<dbReference type="MassIVE" id="Q969M1"/>
<dbReference type="PaxDb" id="9606-ENSP00000356967"/>
<dbReference type="PeptideAtlas" id="Q969M1"/>
<dbReference type="ProteomicsDB" id="6633"/>
<dbReference type="ProteomicsDB" id="75790">
    <molecule id="Q969M1-1"/>
</dbReference>
<dbReference type="Pumba" id="Q969M1"/>
<dbReference type="Antibodypedia" id="34305">
    <property type="antibodies" value="98 antibodies from 18 providers"/>
</dbReference>
<dbReference type="DNASU" id="84134"/>
<dbReference type="Ensembl" id="ENST00000367987.1">
    <molecule id="Q969M1-1"/>
    <property type="protein sequence ID" value="ENSP00000356966.1"/>
    <property type="gene ID" value="ENSG00000158882.15"/>
</dbReference>
<dbReference type="Ensembl" id="ENST00000367988.8">
    <molecule id="Q969M1-1"/>
    <property type="protein sequence ID" value="ENSP00000356967.3"/>
    <property type="gene ID" value="ENSG00000158882.15"/>
</dbReference>
<dbReference type="Ensembl" id="ENST00000545897.5">
    <molecule id="Q969M1-2"/>
    <property type="protein sequence ID" value="ENSP00000443233.1"/>
    <property type="gene ID" value="ENSG00000158882.15"/>
</dbReference>
<dbReference type="GeneID" id="84134"/>
<dbReference type="KEGG" id="hsa:84134"/>
<dbReference type="MANE-Select" id="ENST00000367988.8">
    <property type="protein sequence ID" value="ENSP00000356967.3"/>
    <property type="RefSeq nucleotide sequence ID" value="NM_032174.6"/>
    <property type="RefSeq protein sequence ID" value="NP_115550.2"/>
</dbReference>
<dbReference type="UCSC" id="uc001fzd.5">
    <molecule id="Q969M1-1"/>
    <property type="organism name" value="human"/>
</dbReference>
<dbReference type="AGR" id="HGNC:25756"/>
<dbReference type="CTD" id="84134"/>
<dbReference type="DisGeNET" id="84134"/>
<dbReference type="GeneCards" id="TOMM40L"/>
<dbReference type="HGNC" id="HGNC:25756">
    <property type="gene designation" value="TOMM40L"/>
</dbReference>
<dbReference type="HPA" id="ENSG00000158882">
    <property type="expression patterns" value="Tissue enhanced (tongue)"/>
</dbReference>
<dbReference type="neXtProt" id="NX_Q969M1"/>
<dbReference type="OpenTargets" id="ENSG00000158882"/>
<dbReference type="PharmGKB" id="PA142670714"/>
<dbReference type="VEuPathDB" id="HostDB:ENSG00000158882"/>
<dbReference type="eggNOG" id="KOG3296">
    <property type="taxonomic scope" value="Eukaryota"/>
</dbReference>
<dbReference type="GeneTree" id="ENSGT00390000003308"/>
<dbReference type="HOGENOM" id="CLU_054399_0_0_1"/>
<dbReference type="InParanoid" id="Q969M1"/>
<dbReference type="OMA" id="WTEMGNT"/>
<dbReference type="OrthoDB" id="19656at2759"/>
<dbReference type="PAN-GO" id="Q969M1">
    <property type="GO annotations" value="3 GO annotations based on evolutionary models"/>
</dbReference>
<dbReference type="PhylomeDB" id="Q969M1"/>
<dbReference type="TreeFam" id="TF106204"/>
<dbReference type="PathwayCommons" id="Q969M1"/>
<dbReference type="SignaLink" id="Q969M1"/>
<dbReference type="BioGRID-ORCS" id="84134">
    <property type="hits" value="11 hits in 1158 CRISPR screens"/>
</dbReference>
<dbReference type="CD-CODE" id="91857CE7">
    <property type="entry name" value="Nucleolus"/>
</dbReference>
<dbReference type="CD-CODE" id="FB4E32DD">
    <property type="entry name" value="Presynaptic clusters and postsynaptic densities"/>
</dbReference>
<dbReference type="ChiTaRS" id="TOMM40L">
    <property type="organism name" value="human"/>
</dbReference>
<dbReference type="GeneWiki" id="TOMM40L"/>
<dbReference type="GenomeRNAi" id="84134"/>
<dbReference type="Pharos" id="Q969M1">
    <property type="development level" value="Tdark"/>
</dbReference>
<dbReference type="PRO" id="PR:Q969M1"/>
<dbReference type="Proteomes" id="UP000005640">
    <property type="component" value="Chromosome 1"/>
</dbReference>
<dbReference type="RNAct" id="Q969M1">
    <property type="molecule type" value="protein"/>
</dbReference>
<dbReference type="Bgee" id="ENSG00000158882">
    <property type="expression patterns" value="Expressed in left ventricle myocardium and 157 other cell types or tissues"/>
</dbReference>
<dbReference type="GO" id="GO:0005742">
    <property type="term" value="C:mitochondrial outer membrane translocase complex"/>
    <property type="evidence" value="ECO:0000318"/>
    <property type="project" value="GO_Central"/>
</dbReference>
<dbReference type="GO" id="GO:0005739">
    <property type="term" value="C:mitochondrion"/>
    <property type="evidence" value="ECO:0006056"/>
    <property type="project" value="FlyBase"/>
</dbReference>
<dbReference type="GO" id="GO:0046930">
    <property type="term" value="C:pore complex"/>
    <property type="evidence" value="ECO:0007669"/>
    <property type="project" value="UniProtKB-KW"/>
</dbReference>
<dbReference type="GO" id="GO:0032991">
    <property type="term" value="C:protein-containing complex"/>
    <property type="evidence" value="ECO:0000314"/>
    <property type="project" value="LIFEdb"/>
</dbReference>
<dbReference type="GO" id="GO:0015288">
    <property type="term" value="F:porin activity"/>
    <property type="evidence" value="ECO:0007669"/>
    <property type="project" value="UniProtKB-KW"/>
</dbReference>
<dbReference type="GO" id="GO:0008320">
    <property type="term" value="F:protein transmembrane transporter activity"/>
    <property type="evidence" value="ECO:0000318"/>
    <property type="project" value="GO_Central"/>
</dbReference>
<dbReference type="GO" id="GO:0006811">
    <property type="term" value="P:monoatomic ion transport"/>
    <property type="evidence" value="ECO:0007669"/>
    <property type="project" value="UniProtKB-KW"/>
</dbReference>
<dbReference type="GO" id="GO:0030150">
    <property type="term" value="P:protein import into mitochondrial matrix"/>
    <property type="evidence" value="ECO:0000318"/>
    <property type="project" value="GO_Central"/>
</dbReference>
<dbReference type="CDD" id="cd07305">
    <property type="entry name" value="Porin3_Tom40"/>
    <property type="match status" value="1"/>
</dbReference>
<dbReference type="FunFam" id="2.40.160.10:FF:000005">
    <property type="entry name" value="mitochondrial import receptor subunit TOM40 homolog"/>
    <property type="match status" value="1"/>
</dbReference>
<dbReference type="Gene3D" id="2.40.160.10">
    <property type="entry name" value="Porin"/>
    <property type="match status" value="1"/>
</dbReference>
<dbReference type="InterPro" id="IPR023614">
    <property type="entry name" value="Porin_dom_sf"/>
</dbReference>
<dbReference type="InterPro" id="IPR027246">
    <property type="entry name" value="Porin_Euk/Tom40"/>
</dbReference>
<dbReference type="InterPro" id="IPR037930">
    <property type="entry name" value="Tom40"/>
</dbReference>
<dbReference type="PANTHER" id="PTHR10802">
    <property type="entry name" value="MITOCHONDRIAL IMPORT RECEPTOR SUBUNIT TOM40"/>
    <property type="match status" value="1"/>
</dbReference>
<dbReference type="Pfam" id="PF01459">
    <property type="entry name" value="Porin_3"/>
    <property type="match status" value="1"/>
</dbReference>
<gene>
    <name type="primary">TOMM40L</name>
    <name type="synonym">TOMM40B</name>
</gene>
<proteinExistence type="evidence at protein level"/>
<protein>
    <recommendedName>
        <fullName>Mitochondrial import receptor subunit TOM40B</fullName>
    </recommendedName>
    <alternativeName>
        <fullName>Protein TOMM40-like</fullName>
    </alternativeName>
</protein>
<sequence length="308" mass="33917">MGNTLGLAPMGTLPRRSPRREEPLPNPGSFDELHRLCKDVFPAQMEGVKLVVNKVLSSHFQVAHTIHMSALGLPGYHLHAAYAGDWQLSPTEVFPTVVGDMDSSGSLNAQVLLLLAERLRAKAVFQTQQAKFLTWQFDGEYRGDDYTATLTLGNPDLIGESVIMVAHFLQSLTHRLVLGGELVYHRRPGEEGAILTLAGKYSAVHWVATLNVGSGGAHASYYHRANEQVQVGVEFEANTRLQDTTFSFGYHLTLPQANMVFRGLVDSNWCVGAVLEKKMPPLPVTLALGAFLNHWRNRFHCGFSITVG</sequence>
<name>TM40L_HUMAN</name>
<feature type="chain" id="PRO_0000051536" description="Mitochondrial import receptor subunit TOM40B">
    <location>
        <begin position="1"/>
        <end position="308"/>
    </location>
</feature>
<feature type="region of interest" description="Disordered" evidence="2">
    <location>
        <begin position="1"/>
        <end position="29"/>
    </location>
</feature>
<feature type="region of interest" description="Required for mitochondrial targeting" evidence="1">
    <location>
        <begin position="281"/>
        <end position="308"/>
    </location>
</feature>
<feature type="splice variant" id="VSP_054885" description="In isoform 2." evidence="4">
    <location>
        <begin position="93"/>
        <end position="126"/>
    </location>
</feature>
<feature type="sequence variant" id="VAR_035815" description="In a colorectal cancer sample; somatic mutation." evidence="3">
    <original>D</original>
    <variation>N</variation>
    <location>
        <position position="100"/>
    </location>
</feature>